<comment type="subcellular location">
    <subcellularLocation>
        <location evidence="2">Membrane</location>
        <topology evidence="2">Single-pass membrane protein</topology>
    </subcellularLocation>
</comment>
<accession>Q9CLV6</accession>
<sequence length="57" mass="6438">MFSWKKVLFKGVIAVLSLFVFAVAVFFVGMALLTLDPKDRCLDYGGRYDDATKICEK</sequence>
<organism>
    <name type="scientific">Pasteurella multocida (strain Pm70)</name>
    <dbReference type="NCBI Taxonomy" id="272843"/>
    <lineage>
        <taxon>Bacteria</taxon>
        <taxon>Pseudomonadati</taxon>
        <taxon>Pseudomonadota</taxon>
        <taxon>Gammaproteobacteria</taxon>
        <taxon>Pasteurellales</taxon>
        <taxon>Pasteurellaceae</taxon>
        <taxon>Pasteurella</taxon>
    </lineage>
</organism>
<reference key="1">
    <citation type="journal article" date="2001" name="Proc. Natl. Acad. Sci. U.S.A.">
        <title>Complete genomic sequence of Pasteurella multocida Pm70.</title>
        <authorList>
            <person name="May B.J."/>
            <person name="Zhang Q."/>
            <person name="Li L.L."/>
            <person name="Paustian M.L."/>
            <person name="Whittam T.S."/>
            <person name="Kapur V."/>
        </authorList>
    </citation>
    <scope>NUCLEOTIDE SEQUENCE [LARGE SCALE GENOMIC DNA]</scope>
    <source>
        <strain>Pm70</strain>
    </source>
</reference>
<dbReference type="EMBL" id="AE004439">
    <property type="protein sequence ID" value="AAK03179.1"/>
    <property type="molecule type" value="Genomic_DNA"/>
</dbReference>
<dbReference type="STRING" id="272843.PM1095"/>
<dbReference type="EnsemblBacteria" id="AAK03179">
    <property type="protein sequence ID" value="AAK03179"/>
    <property type="gene ID" value="PM1095"/>
</dbReference>
<dbReference type="KEGG" id="pmu:PM1095"/>
<dbReference type="HOGENOM" id="CLU_3064447_0_0_6"/>
<dbReference type="Proteomes" id="UP000000809">
    <property type="component" value="Chromosome"/>
</dbReference>
<dbReference type="GO" id="GO:0016020">
    <property type="term" value="C:membrane"/>
    <property type="evidence" value="ECO:0007669"/>
    <property type="project" value="UniProtKB-SubCell"/>
</dbReference>
<gene>
    <name type="ordered locus">PM1095</name>
</gene>
<proteinExistence type="predicted"/>
<evidence type="ECO:0000255" key="1"/>
<evidence type="ECO:0000305" key="2"/>
<name>Y1095_PASMU</name>
<keyword id="KW-0472">Membrane</keyword>
<keyword id="KW-1185">Reference proteome</keyword>
<keyword id="KW-0812">Transmembrane</keyword>
<keyword id="KW-1133">Transmembrane helix</keyword>
<protein>
    <recommendedName>
        <fullName>Uncharacterized protein PM1095</fullName>
    </recommendedName>
</protein>
<feature type="chain" id="PRO_0000216312" description="Uncharacterized protein PM1095">
    <location>
        <begin position="1"/>
        <end position="57"/>
    </location>
</feature>
<feature type="transmembrane region" description="Helical" evidence="1">
    <location>
        <begin position="12"/>
        <end position="34"/>
    </location>
</feature>